<reference key="1">
    <citation type="journal article" date="2007" name="Genome Biol.">
        <title>Characterization and modeling of the Haemophilus influenzae core and supragenomes based on the complete genomic sequences of Rd and 12 clinical nontypeable strains.</title>
        <authorList>
            <person name="Hogg J.S."/>
            <person name="Hu F.Z."/>
            <person name="Janto B."/>
            <person name="Boissy R."/>
            <person name="Hayes J."/>
            <person name="Keefe R."/>
            <person name="Post J.C."/>
            <person name="Ehrlich G.D."/>
        </authorList>
    </citation>
    <scope>NUCLEOTIDE SEQUENCE [LARGE SCALE GENOMIC DNA]</scope>
    <source>
        <strain>PittEE</strain>
    </source>
</reference>
<gene>
    <name evidence="1" type="primary">gltX</name>
    <name type="ordered locus">CGSHiEE_01680</name>
</gene>
<sequence length="480" mass="54865">MKLDAPFNLDPNVKVRTRFAPSPTGYLHVGGARTALYSWLYAKHNNGEFVLRIEDTDLERSTPEATAAIIEGMEWLNLPWEHGPYYQTKRFDRYNQVIDEMIEQGLAYRCYCTKEHLEELRHTQEQNKEKPRYDRHCLHDHNHSPDEPHVVRFKNPTEGSVVFDDAVRGRIEISNSELDDLIIRRTDGSPTYNFCVVVDDWDMGITHVVRGEDHINNTPRQINILKAIGAPIPTYAHVSMINGDDGQKLSKRHGAVSVMQYRDDGYLPEALINYLVRLGWGHGDQEIFSREEMINYFELDHVSKSASAFNTEKLQWLNQHYIRELPPEYVAKHLEWHYKDQGIDTSNGPALTDIVSMLAERCKTLKEMARSSRYFFEEFETFDEAAAKKHFKGNAAEALTKVKEKLTALSSWDLHSTHEAIEQTAAELEVGMGKVGMPLRVAVTGSGQSPSMDVTLVGIGRDRVLARIQRAIDFIHAQNA</sequence>
<feature type="chain" id="PRO_1000001907" description="Glutamate--tRNA ligase">
    <location>
        <begin position="1"/>
        <end position="480"/>
    </location>
</feature>
<feature type="short sequence motif" description="'HIGH' region" evidence="1">
    <location>
        <begin position="21"/>
        <end position="31"/>
    </location>
</feature>
<feature type="short sequence motif" description="'KMSKS' region" evidence="1">
    <location>
        <begin position="248"/>
        <end position="252"/>
    </location>
</feature>
<feature type="binding site" evidence="1">
    <location>
        <position position="110"/>
    </location>
    <ligand>
        <name>Zn(2+)</name>
        <dbReference type="ChEBI" id="CHEBI:29105"/>
    </ligand>
</feature>
<feature type="binding site" evidence="1">
    <location>
        <position position="112"/>
    </location>
    <ligand>
        <name>Zn(2+)</name>
        <dbReference type="ChEBI" id="CHEBI:29105"/>
    </ligand>
</feature>
<feature type="binding site" evidence="1">
    <location>
        <position position="137"/>
    </location>
    <ligand>
        <name>Zn(2+)</name>
        <dbReference type="ChEBI" id="CHEBI:29105"/>
    </ligand>
</feature>
<feature type="binding site" evidence="1">
    <location>
        <position position="139"/>
    </location>
    <ligand>
        <name>Zn(2+)</name>
        <dbReference type="ChEBI" id="CHEBI:29105"/>
    </ligand>
</feature>
<feature type="binding site" evidence="1">
    <location>
        <position position="251"/>
    </location>
    <ligand>
        <name>ATP</name>
        <dbReference type="ChEBI" id="CHEBI:30616"/>
    </ligand>
</feature>
<comment type="function">
    <text evidence="1">Catalyzes the attachment of glutamate to tRNA(Glu) in a two-step reaction: glutamate is first activated by ATP to form Glu-AMP and then transferred to the acceptor end of tRNA(Glu).</text>
</comment>
<comment type="catalytic activity">
    <reaction evidence="1">
        <text>tRNA(Glu) + L-glutamate + ATP = L-glutamyl-tRNA(Glu) + AMP + diphosphate</text>
        <dbReference type="Rhea" id="RHEA:23540"/>
        <dbReference type="Rhea" id="RHEA-COMP:9663"/>
        <dbReference type="Rhea" id="RHEA-COMP:9680"/>
        <dbReference type="ChEBI" id="CHEBI:29985"/>
        <dbReference type="ChEBI" id="CHEBI:30616"/>
        <dbReference type="ChEBI" id="CHEBI:33019"/>
        <dbReference type="ChEBI" id="CHEBI:78442"/>
        <dbReference type="ChEBI" id="CHEBI:78520"/>
        <dbReference type="ChEBI" id="CHEBI:456215"/>
        <dbReference type="EC" id="6.1.1.17"/>
    </reaction>
</comment>
<comment type="cofactor">
    <cofactor evidence="1">
        <name>Zn(2+)</name>
        <dbReference type="ChEBI" id="CHEBI:29105"/>
    </cofactor>
    <text evidence="1">Binds 1 zinc ion per subunit.</text>
</comment>
<comment type="subunit">
    <text evidence="1">Monomer.</text>
</comment>
<comment type="subcellular location">
    <subcellularLocation>
        <location evidence="1">Cytoplasm</location>
    </subcellularLocation>
</comment>
<comment type="similarity">
    <text evidence="1">Belongs to the class-I aminoacyl-tRNA synthetase family. Glutamate--tRNA ligase type 1 subfamily.</text>
</comment>
<dbReference type="EC" id="6.1.1.17" evidence="1"/>
<dbReference type="EMBL" id="CP000671">
    <property type="protein sequence ID" value="ABQ97816.1"/>
    <property type="molecule type" value="Genomic_DNA"/>
</dbReference>
<dbReference type="SMR" id="A5UAL5"/>
<dbReference type="KEGG" id="hip:CGSHiEE_01680"/>
<dbReference type="HOGENOM" id="CLU_015768_6_0_6"/>
<dbReference type="GO" id="GO:0005829">
    <property type="term" value="C:cytosol"/>
    <property type="evidence" value="ECO:0007669"/>
    <property type="project" value="TreeGrafter"/>
</dbReference>
<dbReference type="GO" id="GO:0005524">
    <property type="term" value="F:ATP binding"/>
    <property type="evidence" value="ECO:0007669"/>
    <property type="project" value="UniProtKB-UniRule"/>
</dbReference>
<dbReference type="GO" id="GO:0004818">
    <property type="term" value="F:glutamate-tRNA ligase activity"/>
    <property type="evidence" value="ECO:0007669"/>
    <property type="project" value="UniProtKB-UniRule"/>
</dbReference>
<dbReference type="GO" id="GO:0000049">
    <property type="term" value="F:tRNA binding"/>
    <property type="evidence" value="ECO:0007669"/>
    <property type="project" value="InterPro"/>
</dbReference>
<dbReference type="GO" id="GO:0008270">
    <property type="term" value="F:zinc ion binding"/>
    <property type="evidence" value="ECO:0007669"/>
    <property type="project" value="InterPro"/>
</dbReference>
<dbReference type="GO" id="GO:0006424">
    <property type="term" value="P:glutamyl-tRNA aminoacylation"/>
    <property type="evidence" value="ECO:0007669"/>
    <property type="project" value="UniProtKB-UniRule"/>
</dbReference>
<dbReference type="CDD" id="cd00808">
    <property type="entry name" value="GluRS_core"/>
    <property type="match status" value="1"/>
</dbReference>
<dbReference type="FunFam" id="1.10.10.350:FF:000015">
    <property type="entry name" value="Glutamate--tRNA ligase"/>
    <property type="match status" value="1"/>
</dbReference>
<dbReference type="FunFam" id="3.40.50.620:FF:000007">
    <property type="entry name" value="Glutamate--tRNA ligase"/>
    <property type="match status" value="1"/>
</dbReference>
<dbReference type="Gene3D" id="1.10.10.350">
    <property type="match status" value="1"/>
</dbReference>
<dbReference type="Gene3D" id="3.40.50.620">
    <property type="entry name" value="HUPs"/>
    <property type="match status" value="1"/>
</dbReference>
<dbReference type="HAMAP" id="MF_00022">
    <property type="entry name" value="Glu_tRNA_synth_type1"/>
    <property type="match status" value="1"/>
</dbReference>
<dbReference type="InterPro" id="IPR045462">
    <property type="entry name" value="aa-tRNA-synth_I_cd-bd"/>
</dbReference>
<dbReference type="InterPro" id="IPR020751">
    <property type="entry name" value="aa-tRNA-synth_I_codon-bd_sub2"/>
</dbReference>
<dbReference type="InterPro" id="IPR001412">
    <property type="entry name" value="aa-tRNA-synth_I_CS"/>
</dbReference>
<dbReference type="InterPro" id="IPR008925">
    <property type="entry name" value="aa_tRNA-synth_I_cd-bd_sf"/>
</dbReference>
<dbReference type="InterPro" id="IPR004527">
    <property type="entry name" value="Glu-tRNA-ligase_bac/mito"/>
</dbReference>
<dbReference type="InterPro" id="IPR000924">
    <property type="entry name" value="Glu/Gln-tRNA-synth"/>
</dbReference>
<dbReference type="InterPro" id="IPR020058">
    <property type="entry name" value="Glu/Gln-tRNA-synth_Ib_cat-dom"/>
</dbReference>
<dbReference type="InterPro" id="IPR049940">
    <property type="entry name" value="GluQ/Sye"/>
</dbReference>
<dbReference type="InterPro" id="IPR033910">
    <property type="entry name" value="GluRS_core"/>
</dbReference>
<dbReference type="InterPro" id="IPR014729">
    <property type="entry name" value="Rossmann-like_a/b/a_fold"/>
</dbReference>
<dbReference type="NCBIfam" id="TIGR00464">
    <property type="entry name" value="gltX_bact"/>
    <property type="match status" value="1"/>
</dbReference>
<dbReference type="PANTHER" id="PTHR43311">
    <property type="entry name" value="GLUTAMATE--TRNA LIGASE"/>
    <property type="match status" value="1"/>
</dbReference>
<dbReference type="PANTHER" id="PTHR43311:SF2">
    <property type="entry name" value="GLUTAMATE--TRNA LIGASE, MITOCHONDRIAL-RELATED"/>
    <property type="match status" value="1"/>
</dbReference>
<dbReference type="Pfam" id="PF19269">
    <property type="entry name" value="Anticodon_2"/>
    <property type="match status" value="1"/>
</dbReference>
<dbReference type="Pfam" id="PF00749">
    <property type="entry name" value="tRNA-synt_1c"/>
    <property type="match status" value="1"/>
</dbReference>
<dbReference type="PRINTS" id="PR00987">
    <property type="entry name" value="TRNASYNTHGLU"/>
</dbReference>
<dbReference type="SUPFAM" id="SSF48163">
    <property type="entry name" value="An anticodon-binding domain of class I aminoacyl-tRNA synthetases"/>
    <property type="match status" value="1"/>
</dbReference>
<dbReference type="SUPFAM" id="SSF52374">
    <property type="entry name" value="Nucleotidylyl transferase"/>
    <property type="match status" value="1"/>
</dbReference>
<dbReference type="PROSITE" id="PS00178">
    <property type="entry name" value="AA_TRNA_LIGASE_I"/>
    <property type="match status" value="1"/>
</dbReference>
<name>SYE_HAEIE</name>
<keyword id="KW-0030">Aminoacyl-tRNA synthetase</keyword>
<keyword id="KW-0067">ATP-binding</keyword>
<keyword id="KW-0963">Cytoplasm</keyword>
<keyword id="KW-0436">Ligase</keyword>
<keyword id="KW-0479">Metal-binding</keyword>
<keyword id="KW-0547">Nucleotide-binding</keyword>
<keyword id="KW-0648">Protein biosynthesis</keyword>
<keyword id="KW-0862">Zinc</keyword>
<proteinExistence type="inferred from homology"/>
<evidence type="ECO:0000255" key="1">
    <source>
        <dbReference type="HAMAP-Rule" id="MF_00022"/>
    </source>
</evidence>
<organism>
    <name type="scientific">Haemophilus influenzae (strain PittEE)</name>
    <dbReference type="NCBI Taxonomy" id="374930"/>
    <lineage>
        <taxon>Bacteria</taxon>
        <taxon>Pseudomonadati</taxon>
        <taxon>Pseudomonadota</taxon>
        <taxon>Gammaproteobacteria</taxon>
        <taxon>Pasteurellales</taxon>
        <taxon>Pasteurellaceae</taxon>
        <taxon>Haemophilus</taxon>
    </lineage>
</organism>
<protein>
    <recommendedName>
        <fullName evidence="1">Glutamate--tRNA ligase</fullName>
        <ecNumber evidence="1">6.1.1.17</ecNumber>
    </recommendedName>
    <alternativeName>
        <fullName evidence="1">Glutamyl-tRNA synthetase</fullName>
        <shortName evidence="1">GluRS</shortName>
    </alternativeName>
</protein>
<accession>A5UAL5</accession>